<sequence>MKYDFTEIEKKWQAYWEQHQTFKATEEPNKPKYYVLDMFPYPSGSGLHVGHLEGYTASDITARYKRLKGFSVLHPMGWDAFGLPAEQYAIKTGTHPRLTTETNVANFKSTLQRMGFSYDWSREINTTDPGYVKWTQWIFLKLYEKGLAYVDDVPVNWCEELKVVLANEEVDEKVNDGYTVVRRPLRQWMLKITAYAERLLTDLDEVDWPESVKEMQRNWIGKSVGAELDFYLAGTDEKFRIFTTRPDTVFGATYMVLSPEHPLLDKITTDEHKSAVAAYREEAERKSDLERTGLQKEKTGVFTGSYALNPATGKEIPIWTSDFVLMGYGTGAIMSVPAHDERDWEFAKKFGIPIVEVIKSPHSVQEAVFAGKDSVCTNSENAEISINGLAYEEAFEKITDWFEKKGLGQRKVNYKLRDWLFSRQRYWGEPIPIKHYEDGAERAETELPLNLPEVSAYQPSGTGESPLANIAEWLYGEDEHGKFRRETNTMPQWAGSCWYYLRFIDPDNPNEAVSPEKEKYWMNVDLYIGGAEHAVLHLLYARFWHKVLYDVGVVSTKEPFRKLFNQGMILGEDNEKMSKSRGNVITADSVMSGYGADAVRLYEMFLGPLEQVKPWSTNGIEGISRFLGKVWRLVYPNEADGTVQVTDDAPSETVLRRMHKTIKKVGEDTETLKFNTAISEMMIYVNELQKEKCRSRTAIENLLLMLSPFAPHICEELWQALGHEESITFAKFPEYDATLAKDDVVTIAVQVNGKLRGTFDAAAGLSKDDMIAEAMKVESVIKFTEGKEIVKQIAVPNKLVNLVVK</sequence>
<evidence type="ECO:0000255" key="1">
    <source>
        <dbReference type="HAMAP-Rule" id="MF_00049"/>
    </source>
</evidence>
<name>SYL_CHLT3</name>
<protein>
    <recommendedName>
        <fullName evidence="1">Leucine--tRNA ligase</fullName>
        <ecNumber evidence="1">6.1.1.4</ecNumber>
    </recommendedName>
    <alternativeName>
        <fullName evidence="1">Leucyl-tRNA synthetase</fullName>
        <shortName evidence="1">LeuRS</shortName>
    </alternativeName>
</protein>
<feature type="chain" id="PRO_1000091306" description="Leucine--tRNA ligase">
    <location>
        <begin position="1"/>
        <end position="805"/>
    </location>
</feature>
<feature type="short sequence motif" description="'HIGH' region">
    <location>
        <begin position="40"/>
        <end position="51"/>
    </location>
</feature>
<feature type="short sequence motif" description="'KMSKS' region">
    <location>
        <begin position="576"/>
        <end position="580"/>
    </location>
</feature>
<feature type="binding site" evidence="1">
    <location>
        <position position="579"/>
    </location>
    <ligand>
        <name>ATP</name>
        <dbReference type="ChEBI" id="CHEBI:30616"/>
    </ligand>
</feature>
<accession>B3QRU2</accession>
<dbReference type="EC" id="6.1.1.4" evidence="1"/>
<dbReference type="EMBL" id="CP001100">
    <property type="protein sequence ID" value="ACF13895.1"/>
    <property type="molecule type" value="Genomic_DNA"/>
</dbReference>
<dbReference type="RefSeq" id="WP_012499979.1">
    <property type="nucleotide sequence ID" value="NC_011026.1"/>
</dbReference>
<dbReference type="SMR" id="B3QRU2"/>
<dbReference type="STRING" id="517418.Ctha_1432"/>
<dbReference type="KEGG" id="cts:Ctha_1432"/>
<dbReference type="eggNOG" id="COG0495">
    <property type="taxonomic scope" value="Bacteria"/>
</dbReference>
<dbReference type="HOGENOM" id="CLU_004427_0_0_10"/>
<dbReference type="OrthoDB" id="9810365at2"/>
<dbReference type="Proteomes" id="UP000001208">
    <property type="component" value="Chromosome"/>
</dbReference>
<dbReference type="GO" id="GO:0005829">
    <property type="term" value="C:cytosol"/>
    <property type="evidence" value="ECO:0007669"/>
    <property type="project" value="TreeGrafter"/>
</dbReference>
<dbReference type="GO" id="GO:0002161">
    <property type="term" value="F:aminoacyl-tRNA deacylase activity"/>
    <property type="evidence" value="ECO:0007669"/>
    <property type="project" value="InterPro"/>
</dbReference>
<dbReference type="GO" id="GO:0005524">
    <property type="term" value="F:ATP binding"/>
    <property type="evidence" value="ECO:0007669"/>
    <property type="project" value="UniProtKB-UniRule"/>
</dbReference>
<dbReference type="GO" id="GO:0004823">
    <property type="term" value="F:leucine-tRNA ligase activity"/>
    <property type="evidence" value="ECO:0007669"/>
    <property type="project" value="UniProtKB-UniRule"/>
</dbReference>
<dbReference type="GO" id="GO:0006429">
    <property type="term" value="P:leucyl-tRNA aminoacylation"/>
    <property type="evidence" value="ECO:0007669"/>
    <property type="project" value="UniProtKB-UniRule"/>
</dbReference>
<dbReference type="CDD" id="cd07958">
    <property type="entry name" value="Anticodon_Ia_Leu_BEm"/>
    <property type="match status" value="1"/>
</dbReference>
<dbReference type="CDD" id="cd00812">
    <property type="entry name" value="LeuRS_core"/>
    <property type="match status" value="1"/>
</dbReference>
<dbReference type="FunFam" id="3.40.50.620:FF:000056">
    <property type="entry name" value="Leucine--tRNA ligase"/>
    <property type="match status" value="1"/>
</dbReference>
<dbReference type="FunFam" id="3.40.50.620:FF:000077">
    <property type="entry name" value="Leucine--tRNA ligase"/>
    <property type="match status" value="1"/>
</dbReference>
<dbReference type="FunFam" id="1.10.730.10:FF:000011">
    <property type="entry name" value="Leucine--tRNA ligase chloroplastic/mitochondrial"/>
    <property type="match status" value="1"/>
</dbReference>
<dbReference type="Gene3D" id="3.10.20.590">
    <property type="match status" value="1"/>
</dbReference>
<dbReference type="Gene3D" id="3.40.50.620">
    <property type="entry name" value="HUPs"/>
    <property type="match status" value="2"/>
</dbReference>
<dbReference type="Gene3D" id="1.10.730.10">
    <property type="entry name" value="Isoleucyl-tRNA Synthetase, Domain 1"/>
    <property type="match status" value="1"/>
</dbReference>
<dbReference type="HAMAP" id="MF_00049_B">
    <property type="entry name" value="Leu_tRNA_synth_B"/>
    <property type="match status" value="1"/>
</dbReference>
<dbReference type="InterPro" id="IPR002300">
    <property type="entry name" value="aa-tRNA-synth_Ia"/>
</dbReference>
<dbReference type="InterPro" id="IPR002302">
    <property type="entry name" value="Leu-tRNA-ligase"/>
</dbReference>
<dbReference type="InterPro" id="IPR025709">
    <property type="entry name" value="Leu_tRNA-synth_edit"/>
</dbReference>
<dbReference type="InterPro" id="IPR013155">
    <property type="entry name" value="M/V/L/I-tRNA-synth_anticd-bd"/>
</dbReference>
<dbReference type="InterPro" id="IPR015413">
    <property type="entry name" value="Methionyl/Leucyl_tRNA_Synth"/>
</dbReference>
<dbReference type="InterPro" id="IPR014729">
    <property type="entry name" value="Rossmann-like_a/b/a_fold"/>
</dbReference>
<dbReference type="InterPro" id="IPR009080">
    <property type="entry name" value="tRNAsynth_Ia_anticodon-bd"/>
</dbReference>
<dbReference type="InterPro" id="IPR009008">
    <property type="entry name" value="Val/Leu/Ile-tRNA-synth_edit"/>
</dbReference>
<dbReference type="NCBIfam" id="TIGR00396">
    <property type="entry name" value="leuS_bact"/>
    <property type="match status" value="1"/>
</dbReference>
<dbReference type="PANTHER" id="PTHR43740:SF2">
    <property type="entry name" value="LEUCINE--TRNA LIGASE, MITOCHONDRIAL"/>
    <property type="match status" value="1"/>
</dbReference>
<dbReference type="PANTHER" id="PTHR43740">
    <property type="entry name" value="LEUCYL-TRNA SYNTHETASE"/>
    <property type="match status" value="1"/>
</dbReference>
<dbReference type="Pfam" id="PF08264">
    <property type="entry name" value="Anticodon_1"/>
    <property type="match status" value="1"/>
</dbReference>
<dbReference type="Pfam" id="PF00133">
    <property type="entry name" value="tRNA-synt_1"/>
    <property type="match status" value="1"/>
</dbReference>
<dbReference type="Pfam" id="PF13603">
    <property type="entry name" value="tRNA-synt_1_2"/>
    <property type="match status" value="1"/>
</dbReference>
<dbReference type="Pfam" id="PF09334">
    <property type="entry name" value="tRNA-synt_1g"/>
    <property type="match status" value="1"/>
</dbReference>
<dbReference type="PRINTS" id="PR00985">
    <property type="entry name" value="TRNASYNTHLEU"/>
</dbReference>
<dbReference type="SUPFAM" id="SSF47323">
    <property type="entry name" value="Anticodon-binding domain of a subclass of class I aminoacyl-tRNA synthetases"/>
    <property type="match status" value="1"/>
</dbReference>
<dbReference type="SUPFAM" id="SSF52374">
    <property type="entry name" value="Nucleotidylyl transferase"/>
    <property type="match status" value="1"/>
</dbReference>
<dbReference type="SUPFAM" id="SSF50677">
    <property type="entry name" value="ValRS/IleRS/LeuRS editing domain"/>
    <property type="match status" value="1"/>
</dbReference>
<proteinExistence type="inferred from homology"/>
<gene>
    <name evidence="1" type="primary">leuS</name>
    <name type="ordered locus">Ctha_1432</name>
</gene>
<comment type="catalytic activity">
    <reaction evidence="1">
        <text>tRNA(Leu) + L-leucine + ATP = L-leucyl-tRNA(Leu) + AMP + diphosphate</text>
        <dbReference type="Rhea" id="RHEA:11688"/>
        <dbReference type="Rhea" id="RHEA-COMP:9613"/>
        <dbReference type="Rhea" id="RHEA-COMP:9622"/>
        <dbReference type="ChEBI" id="CHEBI:30616"/>
        <dbReference type="ChEBI" id="CHEBI:33019"/>
        <dbReference type="ChEBI" id="CHEBI:57427"/>
        <dbReference type="ChEBI" id="CHEBI:78442"/>
        <dbReference type="ChEBI" id="CHEBI:78494"/>
        <dbReference type="ChEBI" id="CHEBI:456215"/>
        <dbReference type="EC" id="6.1.1.4"/>
    </reaction>
</comment>
<comment type="subcellular location">
    <subcellularLocation>
        <location evidence="1">Cytoplasm</location>
    </subcellularLocation>
</comment>
<comment type="similarity">
    <text evidence="1">Belongs to the class-I aminoacyl-tRNA synthetase family.</text>
</comment>
<organism>
    <name type="scientific">Chloroherpeton thalassium (strain ATCC 35110 / GB-78)</name>
    <dbReference type="NCBI Taxonomy" id="517418"/>
    <lineage>
        <taxon>Bacteria</taxon>
        <taxon>Pseudomonadati</taxon>
        <taxon>Chlorobiota</taxon>
        <taxon>Chlorobiia</taxon>
        <taxon>Chlorobiales</taxon>
        <taxon>Chloroherpetonaceae</taxon>
        <taxon>Chloroherpeton</taxon>
    </lineage>
</organism>
<reference key="1">
    <citation type="submission" date="2008-06" db="EMBL/GenBank/DDBJ databases">
        <title>Complete sequence of Chloroherpeton thalassium ATCC 35110.</title>
        <authorList>
            <consortium name="US DOE Joint Genome Institute"/>
            <person name="Lucas S."/>
            <person name="Copeland A."/>
            <person name="Lapidus A."/>
            <person name="Glavina del Rio T."/>
            <person name="Dalin E."/>
            <person name="Tice H."/>
            <person name="Bruce D."/>
            <person name="Goodwin L."/>
            <person name="Pitluck S."/>
            <person name="Schmutz J."/>
            <person name="Larimer F."/>
            <person name="Land M."/>
            <person name="Hauser L."/>
            <person name="Kyrpides N."/>
            <person name="Mikhailova N."/>
            <person name="Liu Z."/>
            <person name="Li T."/>
            <person name="Zhao F."/>
            <person name="Overmann J."/>
            <person name="Bryant D.A."/>
            <person name="Richardson P."/>
        </authorList>
    </citation>
    <scope>NUCLEOTIDE SEQUENCE [LARGE SCALE GENOMIC DNA]</scope>
    <source>
        <strain>ATCC 35110 / GB-78</strain>
    </source>
</reference>
<keyword id="KW-0030">Aminoacyl-tRNA synthetase</keyword>
<keyword id="KW-0067">ATP-binding</keyword>
<keyword id="KW-0963">Cytoplasm</keyword>
<keyword id="KW-0436">Ligase</keyword>
<keyword id="KW-0547">Nucleotide-binding</keyword>
<keyword id="KW-0648">Protein biosynthesis</keyword>
<keyword id="KW-1185">Reference proteome</keyword>